<feature type="chain" id="PRO_0000436969" description="Mismatch repair endonuclease PMS2">
    <location>
        <begin position="1"/>
        <end position="869"/>
    </location>
</feature>
<feature type="short sequence motif" description="Nuclear localization signal" evidence="1">
    <location>
        <begin position="585"/>
        <end position="588"/>
    </location>
</feature>
<feature type="binding site" evidence="1">
    <location>
        <position position="44"/>
    </location>
    <ligand>
        <name>ATP</name>
        <dbReference type="ChEBI" id="CHEBI:30616"/>
    </ligand>
</feature>
<feature type="binding site" evidence="1">
    <location>
        <position position="69"/>
    </location>
    <ligand>
        <name>ATP</name>
        <dbReference type="ChEBI" id="CHEBI:30616"/>
    </ligand>
</feature>
<feature type="binding site" evidence="1">
    <location>
        <position position="108"/>
    </location>
    <ligand>
        <name>ATP</name>
        <dbReference type="ChEBI" id="CHEBI:30616"/>
    </ligand>
</feature>
<feature type="binding site" evidence="1">
    <location>
        <position position="109"/>
    </location>
    <ligand>
        <name>ATP</name>
        <dbReference type="ChEBI" id="CHEBI:30616"/>
    </ligand>
</feature>
<feature type="binding site" evidence="1">
    <location>
        <position position="110"/>
    </location>
    <ligand>
        <name>ATP</name>
        <dbReference type="ChEBI" id="CHEBI:30616"/>
    </ligand>
</feature>
<feature type="sequence conflict" description="In Ref. 1; CAG32199." evidence="3" ref="1">
    <original>T</original>
    <variation>S</variation>
    <location>
        <position position="578"/>
    </location>
</feature>
<feature type="sequence conflict" description="In Ref. 1; CAG32199." evidence="3" ref="1">
    <original>V</original>
    <variation>L</variation>
    <location>
        <position position="636"/>
    </location>
</feature>
<evidence type="ECO:0000250" key="1">
    <source>
        <dbReference type="UniProtKB" id="P54278"/>
    </source>
</evidence>
<evidence type="ECO:0000269" key="2">
    <source>
    </source>
</evidence>
<evidence type="ECO:0000305" key="3"/>
<keyword id="KW-0067">ATP-binding</keyword>
<keyword id="KW-0227">DNA damage</keyword>
<keyword id="KW-0255">Endonuclease</keyword>
<keyword id="KW-0378">Hydrolase</keyword>
<keyword id="KW-0540">Nuclease</keyword>
<keyword id="KW-0547">Nucleotide-binding</keyword>
<keyword id="KW-0539">Nucleus</keyword>
<keyword id="KW-1185">Reference proteome</keyword>
<name>PMS2_CHICK</name>
<protein>
    <recommendedName>
        <fullName evidence="3">Mismatch repair endonuclease PMS2</fullName>
        <ecNumber>3.1.-.-</ecNumber>
    </recommendedName>
    <alternativeName>
        <fullName evidence="3">DNA mismatch repair protein PMS2</fullName>
    </alternativeName>
    <alternativeName>
        <fullName evidence="1">PMS1 protein homolog 2</fullName>
    </alternativeName>
</protein>
<gene>
    <name evidence="1" type="primary">PMS2</name>
</gene>
<proteinExistence type="evidence at transcript level"/>
<organism>
    <name type="scientific">Gallus gallus</name>
    <name type="common">Chicken</name>
    <dbReference type="NCBI Taxonomy" id="9031"/>
    <lineage>
        <taxon>Eukaryota</taxon>
        <taxon>Metazoa</taxon>
        <taxon>Chordata</taxon>
        <taxon>Craniata</taxon>
        <taxon>Vertebrata</taxon>
        <taxon>Euteleostomi</taxon>
        <taxon>Archelosauria</taxon>
        <taxon>Archosauria</taxon>
        <taxon>Dinosauria</taxon>
        <taxon>Saurischia</taxon>
        <taxon>Theropoda</taxon>
        <taxon>Coelurosauria</taxon>
        <taxon>Aves</taxon>
        <taxon>Neognathae</taxon>
        <taxon>Galloanserae</taxon>
        <taxon>Galliformes</taxon>
        <taxon>Phasianidae</taxon>
        <taxon>Phasianinae</taxon>
        <taxon>Gallus</taxon>
    </lineage>
</organism>
<sequence length="869" mass="97996">MEEAAPCSEPAKTIKRIDRESVHRICSGQVVLSLGTAVKELVENSLDAGATNIDVRLKDHGAELIEVSDNGGGVEEENFEGLTLKHYTSKIQDFSDLIHVETFGFRGEALSSLCALSDVTISTCHKSAKVGTRLVFDHNGKITQKAPYPRQQGTTVSIQQLFHTLPVRHKEFQRNIKKEYAKMVQILQAYCIISKGVRINCTNQVGQGKKSPVVSTTGGPNLKENIGAVFGKKQLQSLIPFVQLPPNEAVCEEYGLKSTDLPEKLYSITGFISRCDHGVGRSTTDRQFFFINQRPCDPAKVVKLVNEVYHLYNKHQYPFIVLNICVDSECVDINVTPDKRQILLQEEKLLLAILKTSLIEMFGSDVNKLNVNQNLLDIVGNVKAPPGDAEKPWVEMSHHSETENPSSEGKRVMTLSRLRESFSLHQTESYFQSPKKVKQRHSSSKQLSLDTILSTVRTQKAVLSEDSESCHEMKSKMPVPRKYLRKVDDIDSGFCSTSESDAGYNTPEAGSCVISESVNNPIEEEFCSSEEQHQNEYLKTVGHSEKSLECDIQVLGTEHKLNRVNDCNNQTNLPQEATNSLPRVRRFKNEADDFKAGIHPKVENTRNYMPCVDVLVEVKKKTVPLEFSMKALAERVRKIVQQQQKCTETQNYRRFRAKISPGENKVAEDELRKEISKEMFAKMEIIGQFNLGFIIAKLNSDLFIIDQHATDEKYNFEMLQQHTVLQGQKLIAPQNLNLTAVNETVLIENLEIFRKNGFDFVINENAPVTQRVKLISLPTSKNWTFGPQDIDELIFMLSDCPGVMCRPSRVRQMFASRACRKSVMIGTALNVQEMKKLVTHMGEIEHPWNCPHGRPTMRHIASLDLIASE</sequence>
<comment type="function">
    <text evidence="1 2">Component of the post-replicative DNA mismatch repair system (MMR). Involved in B cell growth by positively regulating B cell proliferation and controlling replication efficiency. Controls cell cycle to prevent re-replication and defects in DNA damage-induced G2 checkpoint. Doesn't seem to counteract or control the immunoglobulin gene conversion (Ig GC) and to contribute to guanine/uracil mismatch repair. Possesses an ATPase activity, but in the absence of gross structural changes, ATP hydrolysis may not be necessary for proficient mismatch repair (By similarity).</text>
</comment>
<comment type="catalytic activity">
    <reaction evidence="1">
        <text>ATP + H2O = ADP + phosphate + H(+)</text>
        <dbReference type="Rhea" id="RHEA:13065"/>
        <dbReference type="ChEBI" id="CHEBI:15377"/>
        <dbReference type="ChEBI" id="CHEBI:15378"/>
        <dbReference type="ChEBI" id="CHEBI:30616"/>
        <dbReference type="ChEBI" id="CHEBI:43474"/>
        <dbReference type="ChEBI" id="CHEBI:456216"/>
    </reaction>
    <physiologicalReaction direction="left-to-right" evidence="1">
        <dbReference type="Rhea" id="RHEA:13066"/>
    </physiologicalReaction>
</comment>
<comment type="subcellular location">
    <subcellularLocation>
        <location evidence="1">Nucleus</location>
    </subcellularLocation>
</comment>
<comment type="similarity">
    <text evidence="3">Belongs to the DNA mismatch repair MutL/HexB family.</text>
</comment>
<comment type="sequence caution" evidence="3">
    <conflict type="erroneous termination">
        <sequence resource="EMBL-CDS" id="CAG32199"/>
    </conflict>
    <text>Truncated C-terminus.</text>
</comment>
<comment type="sequence caution" evidence="3">
    <conflict type="frameshift">
        <sequence resource="EMBL-CDS" id="CAG32199"/>
    </conflict>
</comment>
<dbReference type="EC" id="3.1.-.-"/>
<dbReference type="EMBL" id="AJ720540">
    <property type="protein sequence ID" value="CAG32199.1"/>
    <property type="status" value="ALT_SEQ"/>
    <property type="molecule type" value="mRNA"/>
</dbReference>
<dbReference type="EMBL" id="AADN03006912">
    <property type="status" value="NOT_ANNOTATED_CDS"/>
    <property type="molecule type" value="Genomic_DNA"/>
</dbReference>
<dbReference type="RefSeq" id="NP_001305951.1">
    <property type="nucleotide sequence ID" value="NM_001319022.1"/>
</dbReference>
<dbReference type="RefSeq" id="XP_015149767.1">
    <property type="nucleotide sequence ID" value="XM_015294281.1"/>
</dbReference>
<dbReference type="SMR" id="F1NQJ3"/>
<dbReference type="FunCoup" id="F1NQJ3">
    <property type="interactions" value="2520"/>
</dbReference>
<dbReference type="STRING" id="9031.ENSGALP00000005417"/>
<dbReference type="PaxDb" id="9031-ENSGALP00000005417"/>
<dbReference type="Ensembl" id="ENSGALT00010052946.1">
    <property type="protein sequence ID" value="ENSGALP00010031851.1"/>
    <property type="gene ID" value="ENSGALG00010021776.1"/>
</dbReference>
<dbReference type="KEGG" id="gga:101752182"/>
<dbReference type="VEuPathDB" id="HostDB:geneid_101752182"/>
<dbReference type="eggNOG" id="KOG1978">
    <property type="taxonomic scope" value="Eukaryota"/>
</dbReference>
<dbReference type="GeneTree" id="ENSGT00940000155381"/>
<dbReference type="HOGENOM" id="CLU_004131_0_2_1"/>
<dbReference type="InParanoid" id="F1NQJ3"/>
<dbReference type="OrthoDB" id="10254304at2759"/>
<dbReference type="Reactome" id="R-GGA-5358565">
    <property type="pathway name" value="Mismatch repair (MMR) directed by MSH2:MSH6 (MutSalpha)"/>
</dbReference>
<dbReference type="PRO" id="PR:F1NQJ3"/>
<dbReference type="Proteomes" id="UP000000539">
    <property type="component" value="Chromosome 14"/>
</dbReference>
<dbReference type="Bgee" id="ENSGALG00000003430">
    <property type="expression patterns" value="Expressed in spermatid and 14 other cell types or tissues"/>
</dbReference>
<dbReference type="GO" id="GO:0005829">
    <property type="term" value="C:cytosol"/>
    <property type="evidence" value="ECO:0007669"/>
    <property type="project" value="Ensembl"/>
</dbReference>
<dbReference type="GO" id="GO:0032389">
    <property type="term" value="C:MutLalpha complex"/>
    <property type="evidence" value="ECO:0000318"/>
    <property type="project" value="GO_Central"/>
</dbReference>
<dbReference type="GO" id="GO:0005654">
    <property type="term" value="C:nucleoplasm"/>
    <property type="evidence" value="ECO:0007669"/>
    <property type="project" value="Ensembl"/>
</dbReference>
<dbReference type="GO" id="GO:0005524">
    <property type="term" value="F:ATP binding"/>
    <property type="evidence" value="ECO:0007669"/>
    <property type="project" value="UniProtKB-KW"/>
</dbReference>
<dbReference type="GO" id="GO:0016887">
    <property type="term" value="F:ATP hydrolysis activity"/>
    <property type="evidence" value="ECO:0000318"/>
    <property type="project" value="GO_Central"/>
</dbReference>
<dbReference type="GO" id="GO:0140664">
    <property type="term" value="F:ATP-dependent DNA damage sensor activity"/>
    <property type="evidence" value="ECO:0007669"/>
    <property type="project" value="InterPro"/>
</dbReference>
<dbReference type="GO" id="GO:0004519">
    <property type="term" value="F:endonuclease activity"/>
    <property type="evidence" value="ECO:0007669"/>
    <property type="project" value="UniProtKB-KW"/>
</dbReference>
<dbReference type="GO" id="GO:0032407">
    <property type="term" value="F:MutSalpha complex binding"/>
    <property type="evidence" value="ECO:0007669"/>
    <property type="project" value="Ensembl"/>
</dbReference>
<dbReference type="GO" id="GO:0032138">
    <property type="term" value="F:single base insertion or deletion binding"/>
    <property type="evidence" value="ECO:0007669"/>
    <property type="project" value="Ensembl"/>
</dbReference>
<dbReference type="GO" id="GO:0003697">
    <property type="term" value="F:single-stranded DNA binding"/>
    <property type="evidence" value="ECO:0007669"/>
    <property type="project" value="Ensembl"/>
</dbReference>
<dbReference type="GO" id="GO:0006298">
    <property type="term" value="P:mismatch repair"/>
    <property type="evidence" value="ECO:0000318"/>
    <property type="project" value="GO_Central"/>
</dbReference>
<dbReference type="GO" id="GO:0007095">
    <property type="term" value="P:mitotic G2 DNA damage checkpoint signaling"/>
    <property type="evidence" value="ECO:0000315"/>
    <property type="project" value="UniProtKB"/>
</dbReference>
<dbReference type="GO" id="GO:0030890">
    <property type="term" value="P:positive regulation of B cell proliferation"/>
    <property type="evidence" value="ECO:0000315"/>
    <property type="project" value="UniProtKB"/>
</dbReference>
<dbReference type="GO" id="GO:0048298">
    <property type="term" value="P:positive regulation of isotype switching to IgA isotypes"/>
    <property type="evidence" value="ECO:0007669"/>
    <property type="project" value="Ensembl"/>
</dbReference>
<dbReference type="GO" id="GO:0048304">
    <property type="term" value="P:positive regulation of isotype switching to IgG isotypes"/>
    <property type="evidence" value="ECO:0007669"/>
    <property type="project" value="Ensembl"/>
</dbReference>
<dbReference type="GO" id="GO:0016446">
    <property type="term" value="P:somatic hypermutation of immunoglobulin genes"/>
    <property type="evidence" value="ECO:0000318"/>
    <property type="project" value="GO_Central"/>
</dbReference>
<dbReference type="GO" id="GO:0016447">
    <property type="term" value="P:somatic recombination of immunoglobulin gene segments"/>
    <property type="evidence" value="ECO:0007669"/>
    <property type="project" value="Ensembl"/>
</dbReference>
<dbReference type="CDD" id="cd16926">
    <property type="entry name" value="HATPase_MutL-MLH-PMS-like"/>
    <property type="match status" value="1"/>
</dbReference>
<dbReference type="CDD" id="cd03484">
    <property type="entry name" value="MutL_Trans_hPMS_2_like"/>
    <property type="match status" value="1"/>
</dbReference>
<dbReference type="FunFam" id="3.30.1370.100:FF:000001">
    <property type="entry name" value="Mismatch repair endonuclease pms1, putative"/>
    <property type="match status" value="1"/>
</dbReference>
<dbReference type="FunFam" id="3.30.565.10:FF:000014">
    <property type="entry name" value="Mismatch repair endonuclease pms1, putative"/>
    <property type="match status" value="1"/>
</dbReference>
<dbReference type="FunFam" id="3.30.230.10:FF:000032">
    <property type="entry name" value="mismatch repair endonuclease PMS2 isoform X2"/>
    <property type="match status" value="1"/>
</dbReference>
<dbReference type="FunFam" id="3.30.1540.20:FF:000019">
    <property type="entry name" value="PMS1 homolog 2, mismatch repair system component"/>
    <property type="match status" value="1"/>
</dbReference>
<dbReference type="Gene3D" id="3.30.230.10">
    <property type="match status" value="1"/>
</dbReference>
<dbReference type="Gene3D" id="3.30.565.10">
    <property type="entry name" value="Histidine kinase-like ATPase, C-terminal domain"/>
    <property type="match status" value="1"/>
</dbReference>
<dbReference type="Gene3D" id="3.30.1540.20">
    <property type="entry name" value="MutL, C-terminal domain, dimerisation subdomain"/>
    <property type="match status" value="1"/>
</dbReference>
<dbReference type="Gene3D" id="3.30.1370.100">
    <property type="entry name" value="MutL, C-terminal domain, regulatory subdomain"/>
    <property type="match status" value="1"/>
</dbReference>
<dbReference type="InterPro" id="IPR014762">
    <property type="entry name" value="DNA_mismatch_repair_CS"/>
</dbReference>
<dbReference type="InterPro" id="IPR013507">
    <property type="entry name" value="DNA_mismatch_S5_2-like"/>
</dbReference>
<dbReference type="InterPro" id="IPR036890">
    <property type="entry name" value="HATPase_C_sf"/>
</dbReference>
<dbReference type="InterPro" id="IPR002099">
    <property type="entry name" value="MutL/Mlh/PMS"/>
</dbReference>
<dbReference type="InterPro" id="IPR038973">
    <property type="entry name" value="MutL/Mlh/Pms-like"/>
</dbReference>
<dbReference type="InterPro" id="IPR014790">
    <property type="entry name" value="MutL_C"/>
</dbReference>
<dbReference type="InterPro" id="IPR042120">
    <property type="entry name" value="MutL_C_dimsub"/>
</dbReference>
<dbReference type="InterPro" id="IPR042121">
    <property type="entry name" value="MutL_C_regsub"/>
</dbReference>
<dbReference type="InterPro" id="IPR037198">
    <property type="entry name" value="MutL_C_sf"/>
</dbReference>
<dbReference type="InterPro" id="IPR020568">
    <property type="entry name" value="Ribosomal_Su5_D2-typ_SF"/>
</dbReference>
<dbReference type="InterPro" id="IPR014721">
    <property type="entry name" value="Ribsml_uS5_D2-typ_fold_subgr"/>
</dbReference>
<dbReference type="NCBIfam" id="TIGR00585">
    <property type="entry name" value="mutl"/>
    <property type="match status" value="1"/>
</dbReference>
<dbReference type="PANTHER" id="PTHR10073">
    <property type="entry name" value="DNA MISMATCH REPAIR PROTEIN MLH, PMS, MUTL"/>
    <property type="match status" value="1"/>
</dbReference>
<dbReference type="PANTHER" id="PTHR10073:SF52">
    <property type="entry name" value="MISMATCH REPAIR ENDONUCLEASE PMS2"/>
    <property type="match status" value="1"/>
</dbReference>
<dbReference type="Pfam" id="PF01119">
    <property type="entry name" value="DNA_mis_repair"/>
    <property type="match status" value="1"/>
</dbReference>
<dbReference type="Pfam" id="PF13589">
    <property type="entry name" value="HATPase_c_3"/>
    <property type="match status" value="1"/>
</dbReference>
<dbReference type="Pfam" id="PF08676">
    <property type="entry name" value="MutL_C"/>
    <property type="match status" value="1"/>
</dbReference>
<dbReference type="SMART" id="SM01340">
    <property type="entry name" value="DNA_mis_repair"/>
    <property type="match status" value="1"/>
</dbReference>
<dbReference type="SMART" id="SM00853">
    <property type="entry name" value="MutL_C"/>
    <property type="match status" value="1"/>
</dbReference>
<dbReference type="SUPFAM" id="SSF55874">
    <property type="entry name" value="ATPase domain of HSP90 chaperone/DNA topoisomerase II/histidine kinase"/>
    <property type="match status" value="1"/>
</dbReference>
<dbReference type="SUPFAM" id="SSF118116">
    <property type="entry name" value="DNA mismatch repair protein MutL"/>
    <property type="match status" value="1"/>
</dbReference>
<dbReference type="SUPFAM" id="SSF54211">
    <property type="entry name" value="Ribosomal protein S5 domain 2-like"/>
    <property type="match status" value="1"/>
</dbReference>
<dbReference type="PROSITE" id="PS00058">
    <property type="entry name" value="DNA_MISMATCH_REPAIR_1"/>
    <property type="match status" value="1"/>
</dbReference>
<reference key="1">
    <citation type="journal article" date="2005" name="Genome Biol.">
        <title>Full-length cDNAs from chicken bursal lymphocytes to facilitate gene function analysis.</title>
        <authorList>
            <person name="Caldwell R.B."/>
            <person name="Kierzek A.M."/>
            <person name="Arakawa H."/>
            <person name="Bezzubov Y."/>
            <person name="Zaim J."/>
            <person name="Fiedler P."/>
            <person name="Kutter S."/>
            <person name="Blagodatski A."/>
            <person name="Kostovska D."/>
            <person name="Koter M."/>
            <person name="Plachy J."/>
            <person name="Carninci P."/>
            <person name="Hayashizaki Y."/>
            <person name="Buerstedde J.-M."/>
        </authorList>
    </citation>
    <scope>NUCLEOTIDE SEQUENCE [LARGE SCALE MRNA]</scope>
    <source>
        <strain>CB</strain>
        <tissue>Bursa of Fabricius</tissue>
    </source>
</reference>
<reference key="2">
    <citation type="journal article" date="2004" name="Nature">
        <title>Sequence and comparative analysis of the chicken genome provide unique perspectives on vertebrate evolution.</title>
        <authorList>
            <person name="Hillier L.W."/>
            <person name="Miller W."/>
            <person name="Birney E."/>
            <person name="Warren W."/>
            <person name="Hardison R.C."/>
            <person name="Ponting C.P."/>
            <person name="Bork P."/>
            <person name="Burt D.W."/>
            <person name="Groenen M.A.M."/>
            <person name="Delany M.E."/>
            <person name="Dodgson J.B."/>
            <person name="Chinwalla A.T."/>
            <person name="Cliften P.F."/>
            <person name="Clifton S.W."/>
            <person name="Delehaunty K.D."/>
            <person name="Fronick C."/>
            <person name="Fulton R.S."/>
            <person name="Graves T.A."/>
            <person name="Kremitzki C."/>
            <person name="Layman D."/>
            <person name="Magrini V."/>
            <person name="McPherson J.D."/>
            <person name="Miner T.L."/>
            <person name="Minx P."/>
            <person name="Nash W.E."/>
            <person name="Nhan M.N."/>
            <person name="Nelson J.O."/>
            <person name="Oddy L.G."/>
            <person name="Pohl C.S."/>
            <person name="Randall-Maher J."/>
            <person name="Smith S.M."/>
            <person name="Wallis J.W."/>
            <person name="Yang S.-P."/>
            <person name="Romanov M.N."/>
            <person name="Rondelli C.M."/>
            <person name="Paton B."/>
            <person name="Smith J."/>
            <person name="Morrice D."/>
            <person name="Daniels L."/>
            <person name="Tempest H.G."/>
            <person name="Robertson L."/>
            <person name="Masabanda J.S."/>
            <person name="Griffin D.K."/>
            <person name="Vignal A."/>
            <person name="Fillon V."/>
            <person name="Jacobbson L."/>
            <person name="Kerje S."/>
            <person name="Andersson L."/>
            <person name="Crooijmans R.P."/>
            <person name="Aerts J."/>
            <person name="van der Poel J.J."/>
            <person name="Ellegren H."/>
            <person name="Caldwell R.B."/>
            <person name="Hubbard S.J."/>
            <person name="Grafham D.V."/>
            <person name="Kierzek A.M."/>
            <person name="McLaren S.R."/>
            <person name="Overton I.M."/>
            <person name="Arakawa H."/>
            <person name="Beattie K.J."/>
            <person name="Bezzubov Y."/>
            <person name="Boardman P.E."/>
            <person name="Bonfield J.K."/>
            <person name="Croning M.D.R."/>
            <person name="Davies R.M."/>
            <person name="Francis M.D."/>
            <person name="Humphray S.J."/>
            <person name="Scott C.E."/>
            <person name="Taylor R.G."/>
            <person name="Tickle C."/>
            <person name="Brown W.R.A."/>
            <person name="Rogers J."/>
            <person name="Buerstedde J.-M."/>
            <person name="Wilson S.A."/>
            <person name="Stubbs L."/>
            <person name="Ovcharenko I."/>
            <person name="Gordon L."/>
            <person name="Lucas S."/>
            <person name="Miller M.M."/>
            <person name="Inoko H."/>
            <person name="Shiina T."/>
            <person name="Kaufman J."/>
            <person name="Salomonsen J."/>
            <person name="Skjoedt K."/>
            <person name="Wong G.K.-S."/>
            <person name="Wang J."/>
            <person name="Liu B."/>
            <person name="Wang J."/>
            <person name="Yu J."/>
            <person name="Yang H."/>
            <person name="Nefedov M."/>
            <person name="Koriabine M."/>
            <person name="Dejong P.J."/>
            <person name="Goodstadt L."/>
            <person name="Webber C."/>
            <person name="Dickens N.J."/>
            <person name="Letunic I."/>
            <person name="Suyama M."/>
            <person name="Torrents D."/>
            <person name="von Mering C."/>
            <person name="Zdobnov E.M."/>
            <person name="Makova K."/>
            <person name="Nekrutenko A."/>
            <person name="Elnitski L."/>
            <person name="Eswara P."/>
            <person name="King D.C."/>
            <person name="Yang S.-P."/>
            <person name="Tyekucheva S."/>
            <person name="Radakrishnan A."/>
            <person name="Harris R.S."/>
            <person name="Chiaromonte F."/>
            <person name="Taylor J."/>
            <person name="He J."/>
            <person name="Rijnkels M."/>
            <person name="Griffiths-Jones S."/>
            <person name="Ureta-Vidal A."/>
            <person name="Hoffman M.M."/>
            <person name="Severin J."/>
            <person name="Searle S.M.J."/>
            <person name="Law A.S."/>
            <person name="Speed D."/>
            <person name="Waddington D."/>
            <person name="Cheng Z."/>
            <person name="Tuzun E."/>
            <person name="Eichler E."/>
            <person name="Bao Z."/>
            <person name="Flicek P."/>
            <person name="Shteynberg D.D."/>
            <person name="Brent M.R."/>
            <person name="Bye J.M."/>
            <person name="Huckle E.J."/>
            <person name="Chatterji S."/>
            <person name="Dewey C."/>
            <person name="Pachter L."/>
            <person name="Kouranov A."/>
            <person name="Mourelatos Z."/>
            <person name="Hatzigeorgiou A.G."/>
            <person name="Paterson A.H."/>
            <person name="Ivarie R."/>
            <person name="Brandstrom M."/>
            <person name="Axelsson E."/>
            <person name="Backstrom N."/>
            <person name="Berlin S."/>
            <person name="Webster M.T."/>
            <person name="Pourquie O."/>
            <person name="Reymond A."/>
            <person name="Ucla C."/>
            <person name="Antonarakis S.E."/>
            <person name="Long M."/>
            <person name="Emerson J.J."/>
            <person name="Betran E."/>
            <person name="Dupanloup I."/>
            <person name="Kaessmann H."/>
            <person name="Hinrichs A.S."/>
            <person name="Bejerano G."/>
            <person name="Furey T.S."/>
            <person name="Harte R.A."/>
            <person name="Raney B."/>
            <person name="Siepel A."/>
            <person name="Kent W.J."/>
            <person name="Haussler D."/>
            <person name="Eyras E."/>
            <person name="Castelo R."/>
            <person name="Abril J.F."/>
            <person name="Castellano S."/>
            <person name="Camara F."/>
            <person name="Parra G."/>
            <person name="Guigo R."/>
            <person name="Bourque G."/>
            <person name="Tesler G."/>
            <person name="Pevzner P.A."/>
            <person name="Smit A."/>
            <person name="Fulton L.A."/>
            <person name="Mardis E.R."/>
            <person name="Wilson R.K."/>
        </authorList>
    </citation>
    <scope>NUCLEOTIDE SEQUENCE [LARGE SCALE GENOMIC DNA]</scope>
    <source>
        <strain>Red jungle fowl</strain>
    </source>
</reference>
<reference key="3">
    <citation type="journal article" date="2013" name="Nucleic Acids Res.">
        <title>MSH6- or PMS2-deficiency causes re-replication in DT40 B cells, but it has little effect on immunoglobulin gene conversion or on repair of AID-generated uracils.</title>
        <authorList>
            <person name="Campo V.A."/>
            <person name="Patenaude A.M."/>
            <person name="Kaden S."/>
            <person name="Horb L."/>
            <person name="Firka D."/>
            <person name="Jiricny J."/>
            <person name="Di Noia J.M."/>
        </authorList>
    </citation>
    <scope>FUNCTION</scope>
</reference>
<accession>F1NQJ3</accession>
<accession>Q5ZJ94</accession>